<keyword id="KW-0997">Cell inner membrane</keyword>
<keyword id="KW-1003">Cell membrane</keyword>
<keyword id="KW-0472">Membrane</keyword>
<keyword id="KW-1185">Reference proteome</keyword>
<keyword id="KW-0812">Transmembrane</keyword>
<keyword id="KW-1133">Transmembrane helix</keyword>
<proteinExistence type="inferred from homology"/>
<organism>
    <name type="scientific">Shigella dysenteriae serotype 1 (strain Sd197)</name>
    <dbReference type="NCBI Taxonomy" id="300267"/>
    <lineage>
        <taxon>Bacteria</taxon>
        <taxon>Pseudomonadati</taxon>
        <taxon>Pseudomonadota</taxon>
        <taxon>Gammaproteobacteria</taxon>
        <taxon>Enterobacterales</taxon>
        <taxon>Enterobacteriaceae</taxon>
        <taxon>Shigella</taxon>
    </lineage>
</organism>
<evidence type="ECO:0000250" key="1"/>
<evidence type="ECO:0000255" key="2"/>
<evidence type="ECO:0000305" key="3"/>
<comment type="subcellular location">
    <subcellularLocation>
        <location evidence="1">Cell inner membrane</location>
        <topology evidence="1">Multi-pass membrane protein</topology>
    </subcellularLocation>
</comment>
<comment type="similarity">
    <text evidence="3">Belongs to the UPF0056 (MarC) family.</text>
</comment>
<accession>Q32G29</accession>
<gene>
    <name type="primary">marC</name>
    <name type="ordered locus">SDY_1598</name>
</gene>
<reference key="1">
    <citation type="journal article" date="2005" name="Nucleic Acids Res.">
        <title>Genome dynamics and diversity of Shigella species, the etiologic agents of bacillary dysentery.</title>
        <authorList>
            <person name="Yang F."/>
            <person name="Yang J."/>
            <person name="Zhang X."/>
            <person name="Chen L."/>
            <person name="Jiang Y."/>
            <person name="Yan Y."/>
            <person name="Tang X."/>
            <person name="Wang J."/>
            <person name="Xiong Z."/>
            <person name="Dong J."/>
            <person name="Xue Y."/>
            <person name="Zhu Y."/>
            <person name="Xu X."/>
            <person name="Sun L."/>
            <person name="Chen S."/>
            <person name="Nie H."/>
            <person name="Peng J."/>
            <person name="Xu J."/>
            <person name="Wang Y."/>
            <person name="Yuan Z."/>
            <person name="Wen Y."/>
            <person name="Yao Z."/>
            <person name="Shen Y."/>
            <person name="Qiang B."/>
            <person name="Hou Y."/>
            <person name="Yu J."/>
            <person name="Jin Q."/>
        </authorList>
    </citation>
    <scope>NUCLEOTIDE SEQUENCE [LARGE SCALE GENOMIC DNA]</scope>
    <source>
        <strain>Sd197</strain>
    </source>
</reference>
<sequence>MLDLFKAIGLGLVVLLPLANPLTTVALFLGLAGNMNSAERNRQSLMASVYVFAIMMVAYYAGQLVMDTFGISIPGLRIAGGLIVAFIGFRMLFPQQKAIDSPEAKSKSEELEDEPSANIAFVPLAMPSTAGPGTIAMIISSASTVRQSSTFADWVLMVAPPLIFFLVAVILWGSLRSSGAIMRLVGKGGIEAISRLMGFLLVCMGVQFIINGILEIIKTYH</sequence>
<protein>
    <recommendedName>
        <fullName>UPF0056 inner membrane protein MarC</fullName>
    </recommendedName>
</protein>
<feature type="chain" id="PRO_0000343827" description="UPF0056 inner membrane protein MarC">
    <location>
        <begin position="1"/>
        <end position="221"/>
    </location>
</feature>
<feature type="topological domain" description="Periplasmic" evidence="2">
    <location>
        <begin position="1"/>
        <end position="7"/>
    </location>
</feature>
<feature type="transmembrane region" description="Helical" evidence="2">
    <location>
        <begin position="8"/>
        <end position="28"/>
    </location>
</feature>
<feature type="topological domain" description="Cytoplasmic" evidence="2">
    <location>
        <begin position="29"/>
        <end position="44"/>
    </location>
</feature>
<feature type="transmembrane region" description="Helical" evidence="2">
    <location>
        <begin position="45"/>
        <end position="65"/>
    </location>
</feature>
<feature type="topological domain" description="Periplasmic" evidence="2">
    <location>
        <begin position="66"/>
        <end position="68"/>
    </location>
</feature>
<feature type="transmembrane region" description="Helical" evidence="2">
    <location>
        <begin position="69"/>
        <end position="89"/>
    </location>
</feature>
<feature type="topological domain" description="Cytoplasmic" evidence="2">
    <location>
        <begin position="90"/>
        <end position="118"/>
    </location>
</feature>
<feature type="transmembrane region" description="Helical" evidence="2">
    <location>
        <begin position="119"/>
        <end position="139"/>
    </location>
</feature>
<feature type="topological domain" description="Periplasmic" evidence="2">
    <location>
        <begin position="140"/>
        <end position="154"/>
    </location>
</feature>
<feature type="transmembrane region" description="Helical" evidence="2">
    <location>
        <begin position="155"/>
        <end position="175"/>
    </location>
</feature>
<feature type="topological domain" description="Cytoplasmic" evidence="2">
    <location>
        <begin position="176"/>
        <end position="196"/>
    </location>
</feature>
<feature type="transmembrane region" description="Helical" evidence="2">
    <location>
        <begin position="197"/>
        <end position="217"/>
    </location>
</feature>
<feature type="topological domain" description="Periplasmic" evidence="2">
    <location>
        <begin position="218"/>
        <end position="221"/>
    </location>
</feature>
<dbReference type="EMBL" id="CP000034">
    <property type="protein sequence ID" value="ABB61726.1"/>
    <property type="molecule type" value="Genomic_DNA"/>
</dbReference>
<dbReference type="RefSeq" id="WP_000885033.1">
    <property type="nucleotide sequence ID" value="NC_007606.1"/>
</dbReference>
<dbReference type="RefSeq" id="YP_403217.1">
    <property type="nucleotide sequence ID" value="NC_007606.1"/>
</dbReference>
<dbReference type="STRING" id="300267.SDY_1598"/>
<dbReference type="EnsemblBacteria" id="ABB61726">
    <property type="protein sequence ID" value="ABB61726"/>
    <property type="gene ID" value="SDY_1598"/>
</dbReference>
<dbReference type="GeneID" id="93775693"/>
<dbReference type="KEGG" id="sdy:SDY_1598"/>
<dbReference type="PATRIC" id="fig|300267.13.peg.1920"/>
<dbReference type="HOGENOM" id="CLU_079909_2_0_6"/>
<dbReference type="Proteomes" id="UP000002716">
    <property type="component" value="Chromosome"/>
</dbReference>
<dbReference type="GO" id="GO:0005886">
    <property type="term" value="C:plasma membrane"/>
    <property type="evidence" value="ECO:0007669"/>
    <property type="project" value="UniProtKB-SubCell"/>
</dbReference>
<dbReference type="InterPro" id="IPR002771">
    <property type="entry name" value="Multi_antbiot-R_MarC"/>
</dbReference>
<dbReference type="NCBIfam" id="TIGR00427">
    <property type="entry name" value="NAAT family transporter"/>
    <property type="match status" value="1"/>
</dbReference>
<dbReference type="NCBIfam" id="NF008228">
    <property type="entry name" value="PRK10995.1"/>
    <property type="match status" value="1"/>
</dbReference>
<dbReference type="PANTHER" id="PTHR33508:SF2">
    <property type="entry name" value="UPF0056 INNER MEMBRANE PROTEIN MARC"/>
    <property type="match status" value="1"/>
</dbReference>
<dbReference type="PANTHER" id="PTHR33508">
    <property type="entry name" value="UPF0056 MEMBRANE PROTEIN YHCE"/>
    <property type="match status" value="1"/>
</dbReference>
<dbReference type="Pfam" id="PF01914">
    <property type="entry name" value="MarC"/>
    <property type="match status" value="1"/>
</dbReference>
<name>MARC_SHIDS</name>